<name>RL30_BEII9</name>
<keyword id="KW-1185">Reference proteome</keyword>
<keyword id="KW-0687">Ribonucleoprotein</keyword>
<keyword id="KW-0689">Ribosomal protein</keyword>
<accession>B2IK80</accession>
<reference key="1">
    <citation type="journal article" date="2010" name="J. Bacteriol.">
        <title>Complete genome sequence of Beijerinckia indica subsp. indica.</title>
        <authorList>
            <person name="Tamas I."/>
            <person name="Dedysh S.N."/>
            <person name="Liesack W."/>
            <person name="Stott M.B."/>
            <person name="Alam M."/>
            <person name="Murrell J.C."/>
            <person name="Dunfield P.F."/>
        </authorList>
    </citation>
    <scope>NUCLEOTIDE SEQUENCE [LARGE SCALE GENOMIC DNA]</scope>
    <source>
        <strain>ATCC 9039 / DSM 1715 / NCIMB 8712</strain>
    </source>
</reference>
<comment type="subunit">
    <text evidence="1">Part of the 50S ribosomal subunit.</text>
</comment>
<comment type="similarity">
    <text evidence="1">Belongs to the universal ribosomal protein uL30 family.</text>
</comment>
<sequence length="64" mass="6839">MTTSTNRITIEQVKSPIGRPGSQKATLIGLGLNKIGRRSSLEDSPAVRGMIAKVAHLIRVIDGQ</sequence>
<protein>
    <recommendedName>
        <fullName evidence="1">Large ribosomal subunit protein uL30</fullName>
    </recommendedName>
    <alternativeName>
        <fullName evidence="2">50S ribosomal protein L30</fullName>
    </alternativeName>
</protein>
<gene>
    <name evidence="1" type="primary">rpmD</name>
    <name type="ordered locus">Bind_1372</name>
</gene>
<dbReference type="EMBL" id="CP001016">
    <property type="protein sequence ID" value="ACB95012.1"/>
    <property type="molecule type" value="Genomic_DNA"/>
</dbReference>
<dbReference type="RefSeq" id="WP_012384369.1">
    <property type="nucleotide sequence ID" value="NC_010581.1"/>
</dbReference>
<dbReference type="SMR" id="B2IK80"/>
<dbReference type="STRING" id="395963.Bind_1372"/>
<dbReference type="KEGG" id="bid:Bind_1372"/>
<dbReference type="eggNOG" id="COG1841">
    <property type="taxonomic scope" value="Bacteria"/>
</dbReference>
<dbReference type="HOGENOM" id="CLU_131047_1_2_5"/>
<dbReference type="OrthoDB" id="9812790at2"/>
<dbReference type="Proteomes" id="UP000001695">
    <property type="component" value="Chromosome"/>
</dbReference>
<dbReference type="GO" id="GO:0022625">
    <property type="term" value="C:cytosolic large ribosomal subunit"/>
    <property type="evidence" value="ECO:0007669"/>
    <property type="project" value="TreeGrafter"/>
</dbReference>
<dbReference type="GO" id="GO:0003735">
    <property type="term" value="F:structural constituent of ribosome"/>
    <property type="evidence" value="ECO:0007669"/>
    <property type="project" value="InterPro"/>
</dbReference>
<dbReference type="GO" id="GO:0006412">
    <property type="term" value="P:translation"/>
    <property type="evidence" value="ECO:0007669"/>
    <property type="project" value="UniProtKB-UniRule"/>
</dbReference>
<dbReference type="CDD" id="cd01658">
    <property type="entry name" value="Ribosomal_L30"/>
    <property type="match status" value="1"/>
</dbReference>
<dbReference type="Gene3D" id="3.30.1390.20">
    <property type="entry name" value="Ribosomal protein L30, ferredoxin-like fold domain"/>
    <property type="match status" value="1"/>
</dbReference>
<dbReference type="HAMAP" id="MF_01371_B">
    <property type="entry name" value="Ribosomal_uL30_B"/>
    <property type="match status" value="1"/>
</dbReference>
<dbReference type="InterPro" id="IPR036919">
    <property type="entry name" value="Ribo_uL30_ferredoxin-like_sf"/>
</dbReference>
<dbReference type="InterPro" id="IPR005996">
    <property type="entry name" value="Ribosomal_uL30_bac-type"/>
</dbReference>
<dbReference type="InterPro" id="IPR016082">
    <property type="entry name" value="Ribosomal_uL30_ferredoxin-like"/>
</dbReference>
<dbReference type="NCBIfam" id="TIGR01308">
    <property type="entry name" value="rpmD_bact"/>
    <property type="match status" value="1"/>
</dbReference>
<dbReference type="PANTHER" id="PTHR15892:SF2">
    <property type="entry name" value="LARGE RIBOSOMAL SUBUNIT PROTEIN UL30M"/>
    <property type="match status" value="1"/>
</dbReference>
<dbReference type="PANTHER" id="PTHR15892">
    <property type="entry name" value="MITOCHONDRIAL RIBOSOMAL PROTEIN L30"/>
    <property type="match status" value="1"/>
</dbReference>
<dbReference type="Pfam" id="PF00327">
    <property type="entry name" value="Ribosomal_L30"/>
    <property type="match status" value="1"/>
</dbReference>
<dbReference type="PIRSF" id="PIRSF002211">
    <property type="entry name" value="Ribosomal_L30_bac-type"/>
    <property type="match status" value="1"/>
</dbReference>
<dbReference type="SUPFAM" id="SSF55129">
    <property type="entry name" value="Ribosomal protein L30p/L7e"/>
    <property type="match status" value="1"/>
</dbReference>
<organism>
    <name type="scientific">Beijerinckia indica subsp. indica (strain ATCC 9039 / DSM 1715 / NCIMB 8712)</name>
    <dbReference type="NCBI Taxonomy" id="395963"/>
    <lineage>
        <taxon>Bacteria</taxon>
        <taxon>Pseudomonadati</taxon>
        <taxon>Pseudomonadota</taxon>
        <taxon>Alphaproteobacteria</taxon>
        <taxon>Hyphomicrobiales</taxon>
        <taxon>Beijerinckiaceae</taxon>
        <taxon>Beijerinckia</taxon>
    </lineage>
</organism>
<evidence type="ECO:0000255" key="1">
    <source>
        <dbReference type="HAMAP-Rule" id="MF_01371"/>
    </source>
</evidence>
<evidence type="ECO:0000305" key="2"/>
<feature type="chain" id="PRO_0000347078" description="Large ribosomal subunit protein uL30">
    <location>
        <begin position="1"/>
        <end position="64"/>
    </location>
</feature>
<proteinExistence type="inferred from homology"/>